<proteinExistence type="inferred from homology"/>
<accession>A9WWM7</accession>
<protein>
    <recommendedName>
        <fullName evidence="1">UPF0335 protein BSUIS_B1228</fullName>
    </recommendedName>
</protein>
<gene>
    <name type="ordered locus">BSUIS_B1228</name>
</gene>
<comment type="similarity">
    <text evidence="1">Belongs to the UPF0335 family.</text>
</comment>
<name>Y3728_BRUSI</name>
<organism>
    <name type="scientific">Brucella suis (strain ATCC 23445 / NCTC 10510)</name>
    <dbReference type="NCBI Taxonomy" id="470137"/>
    <lineage>
        <taxon>Bacteria</taxon>
        <taxon>Pseudomonadati</taxon>
        <taxon>Pseudomonadota</taxon>
        <taxon>Alphaproteobacteria</taxon>
        <taxon>Hyphomicrobiales</taxon>
        <taxon>Brucellaceae</taxon>
        <taxon>Brucella/Ochrobactrum group</taxon>
        <taxon>Brucella</taxon>
    </lineage>
</organism>
<feature type="chain" id="PRO_1000083682" description="UPF0335 protein BSUIS_B1228">
    <location>
        <begin position="1"/>
        <end position="86"/>
    </location>
</feature>
<dbReference type="EMBL" id="CP000912">
    <property type="protein sequence ID" value="ABY40163.1"/>
    <property type="molecule type" value="Genomic_DNA"/>
</dbReference>
<dbReference type="RefSeq" id="WP_002964837.1">
    <property type="nucleotide sequence ID" value="NC_010167.1"/>
</dbReference>
<dbReference type="SMR" id="A9WWM7"/>
<dbReference type="KEGG" id="bmt:BSUIS_B1228"/>
<dbReference type="HOGENOM" id="CLU_158651_3_0_5"/>
<dbReference type="Proteomes" id="UP000008545">
    <property type="component" value="Chromosome II"/>
</dbReference>
<dbReference type="GO" id="GO:0003677">
    <property type="term" value="F:DNA binding"/>
    <property type="evidence" value="ECO:0007669"/>
    <property type="project" value="InterPro"/>
</dbReference>
<dbReference type="HAMAP" id="MF_00797">
    <property type="entry name" value="UPF0335"/>
    <property type="match status" value="1"/>
</dbReference>
<dbReference type="InterPro" id="IPR018753">
    <property type="entry name" value="GapR-like"/>
</dbReference>
<dbReference type="InterPro" id="IPR046367">
    <property type="entry name" value="GapR-like_DNA-bd"/>
</dbReference>
<dbReference type="NCBIfam" id="NF010247">
    <property type="entry name" value="PRK13694.1"/>
    <property type="match status" value="1"/>
</dbReference>
<dbReference type="Pfam" id="PF10073">
    <property type="entry name" value="GapR_DNA-bd"/>
    <property type="match status" value="1"/>
</dbReference>
<evidence type="ECO:0000255" key="1">
    <source>
        <dbReference type="HAMAP-Rule" id="MF_00797"/>
    </source>
</evidence>
<sequence length="86" mass="9933">MSDDITSEAQTIAVGQLRAFIERIERLEEEKKTIGDDIKEVYAELKGSGFDSKVVRTIIRLRKKEDHERQEEEAMLQLYMDALGMS</sequence>
<reference key="1">
    <citation type="submission" date="2007-12" db="EMBL/GenBank/DDBJ databases">
        <title>Brucella suis ATCC 23445 whole genome shotgun sequencing project.</title>
        <authorList>
            <person name="Setubal J.C."/>
            <person name="Bowns C."/>
            <person name="Boyle S."/>
            <person name="Crasta O.R."/>
            <person name="Czar M.J."/>
            <person name="Dharmanolla C."/>
            <person name="Gillespie J.J."/>
            <person name="Kenyon R.W."/>
            <person name="Lu J."/>
            <person name="Mane S."/>
            <person name="Mohapatra S."/>
            <person name="Nagrani S."/>
            <person name="Purkayastha A."/>
            <person name="Rajasimha H.K."/>
            <person name="Shallom J.M."/>
            <person name="Shallom S."/>
            <person name="Shukla M."/>
            <person name="Snyder E.E."/>
            <person name="Sobral B.W."/>
            <person name="Wattam A.R."/>
            <person name="Will R."/>
            <person name="Williams K."/>
            <person name="Yoo H."/>
            <person name="Bruce D."/>
            <person name="Detter C."/>
            <person name="Munk C."/>
            <person name="Brettin T.S."/>
        </authorList>
    </citation>
    <scope>NUCLEOTIDE SEQUENCE [LARGE SCALE GENOMIC DNA]</scope>
    <source>
        <strain>ATCC 23445 / NCTC 10510</strain>
    </source>
</reference>